<comment type="subcellular location">
    <subcellularLocation>
        <location>Secreted</location>
    </subcellularLocation>
</comment>
<comment type="similarity">
    <text evidence="3">Belongs to the heat-stable enterotoxin family.</text>
</comment>
<comment type="caution">
    <text evidence="3">This toxin is only expressed in some vibrio strains. Most serotype-O1 strains do not express this toxin.</text>
</comment>
<reference key="1">
    <citation type="journal article" date="1993" name="Microbiol. Immunol.">
        <title>The gene encoding the heat-stable enterotoxin of Vibrio cholerae is flanked by 123-base pair direct repeats.</title>
        <authorList>
            <person name="Ogawa A."/>
            <person name="Takeda T."/>
        </authorList>
    </citation>
    <scope>NUCLEOTIDE SEQUENCE [GENOMIC DNA]</scope>
    <source>
        <strain>El Tor Inaba GP156 / Serotype O1</strain>
    </source>
</reference>
<name>HSTO_VIBCL</name>
<accession>Q07425</accession>
<gene>
    <name type="primary">sto</name>
</gene>
<evidence type="ECO:0000250" key="1"/>
<evidence type="ECO:0000255" key="2"/>
<evidence type="ECO:0000305" key="3"/>
<proteinExistence type="inferred from homology"/>
<keyword id="KW-1015">Disulfide bond</keyword>
<keyword id="KW-0260">Enterotoxin</keyword>
<keyword id="KW-0964">Secreted</keyword>
<keyword id="KW-0732">Signal</keyword>
<keyword id="KW-0800">Toxin</keyword>
<keyword id="KW-0843">Virulence</keyword>
<organism>
    <name type="scientific">Vibrio cholerae</name>
    <dbReference type="NCBI Taxonomy" id="666"/>
    <lineage>
        <taxon>Bacteria</taxon>
        <taxon>Pseudomonadati</taxon>
        <taxon>Pseudomonadota</taxon>
        <taxon>Gammaproteobacteria</taxon>
        <taxon>Vibrionales</taxon>
        <taxon>Vibrionaceae</taxon>
        <taxon>Vibrio</taxon>
    </lineage>
</organism>
<dbReference type="EMBL" id="L03220">
    <property type="protein sequence ID" value="AAA16516.1"/>
    <property type="molecule type" value="Unassigned_DNA"/>
</dbReference>
<dbReference type="EMBL" id="M97591">
    <property type="protein sequence ID" value="AAA27561.1"/>
    <property type="molecule type" value="Genomic_DNA"/>
</dbReference>
<dbReference type="RefSeq" id="WP_000792785.1">
    <property type="nucleotide sequence ID" value="NZ_QXWD01000053.1"/>
</dbReference>
<dbReference type="GO" id="GO:0005615">
    <property type="term" value="C:extracellular space"/>
    <property type="evidence" value="ECO:0007669"/>
    <property type="project" value="InterPro"/>
</dbReference>
<dbReference type="GO" id="GO:0090729">
    <property type="term" value="F:toxin activity"/>
    <property type="evidence" value="ECO:0007669"/>
    <property type="project" value="UniProtKB-KW"/>
</dbReference>
<dbReference type="InterPro" id="IPR019806">
    <property type="entry name" value="Heat-stable_enterotox_CS"/>
</dbReference>
<dbReference type="InterPro" id="IPR001489">
    <property type="entry name" value="Heat-stable_enterotox_STa"/>
</dbReference>
<dbReference type="Pfam" id="PF02048">
    <property type="entry name" value="Enterotoxin_ST"/>
    <property type="match status" value="1"/>
</dbReference>
<dbReference type="PROSITE" id="PS00273">
    <property type="entry name" value="ENTEROTOXIN_H_STABLE"/>
    <property type="match status" value="1"/>
</dbReference>
<protein>
    <recommendedName>
        <fullName>Heat-stable enterotoxin STO</fullName>
    </recommendedName>
    <alternativeName>
        <fullName>O1-ST</fullName>
    </alternativeName>
</protein>
<feature type="signal peptide" evidence="2">
    <location>
        <begin position="1"/>
        <end position="18"/>
    </location>
</feature>
<feature type="propeptide" id="PRO_0000035133" evidence="1">
    <location>
        <begin position="19"/>
        <end position="61"/>
    </location>
</feature>
<feature type="peptide" id="PRO_0000035134" description="Heat-stable enterotoxin STO">
    <location>
        <begin position="62"/>
        <end position="78"/>
    </location>
</feature>
<feature type="disulfide bond" evidence="1">
    <location>
        <begin position="64"/>
        <end position="69"/>
    </location>
</feature>
<feature type="disulfide bond" evidence="1">
    <location>
        <begin position="65"/>
        <end position="73"/>
    </location>
</feature>
<feature type="disulfide bond" evidence="1">
    <location>
        <begin position="68"/>
        <end position="76"/>
    </location>
</feature>
<sequence>MKNLFIALMLLFSSIALSQTVENDTKTVQQPQQIESKVNIKKLSENEECPFIKQVDENGNLIDCCEICCNPACFGCLN</sequence>